<gene>
    <name evidence="1" type="primary">rpsO</name>
    <name type="ordered locus">AnaeK_1166</name>
</gene>
<dbReference type="EMBL" id="CP001131">
    <property type="protein sequence ID" value="ACG72399.1"/>
    <property type="molecule type" value="Genomic_DNA"/>
</dbReference>
<dbReference type="RefSeq" id="WP_011420164.1">
    <property type="nucleotide sequence ID" value="NC_011145.1"/>
</dbReference>
<dbReference type="SMR" id="B4UHG4"/>
<dbReference type="KEGG" id="ank:AnaeK_1166"/>
<dbReference type="HOGENOM" id="CLU_148518_0_0_7"/>
<dbReference type="OrthoDB" id="9799262at2"/>
<dbReference type="Proteomes" id="UP000001871">
    <property type="component" value="Chromosome"/>
</dbReference>
<dbReference type="GO" id="GO:0022627">
    <property type="term" value="C:cytosolic small ribosomal subunit"/>
    <property type="evidence" value="ECO:0007669"/>
    <property type="project" value="TreeGrafter"/>
</dbReference>
<dbReference type="GO" id="GO:0019843">
    <property type="term" value="F:rRNA binding"/>
    <property type="evidence" value="ECO:0007669"/>
    <property type="project" value="UniProtKB-UniRule"/>
</dbReference>
<dbReference type="GO" id="GO:0003735">
    <property type="term" value="F:structural constituent of ribosome"/>
    <property type="evidence" value="ECO:0007669"/>
    <property type="project" value="InterPro"/>
</dbReference>
<dbReference type="GO" id="GO:0006412">
    <property type="term" value="P:translation"/>
    <property type="evidence" value="ECO:0007669"/>
    <property type="project" value="UniProtKB-UniRule"/>
</dbReference>
<dbReference type="CDD" id="cd00353">
    <property type="entry name" value="Ribosomal_S15p_S13e"/>
    <property type="match status" value="1"/>
</dbReference>
<dbReference type="FunFam" id="1.10.287.10:FF:000002">
    <property type="entry name" value="30S ribosomal protein S15"/>
    <property type="match status" value="1"/>
</dbReference>
<dbReference type="Gene3D" id="6.10.250.3130">
    <property type="match status" value="1"/>
</dbReference>
<dbReference type="Gene3D" id="1.10.287.10">
    <property type="entry name" value="S15/NS1, RNA-binding"/>
    <property type="match status" value="1"/>
</dbReference>
<dbReference type="HAMAP" id="MF_01343_B">
    <property type="entry name" value="Ribosomal_uS15_B"/>
    <property type="match status" value="1"/>
</dbReference>
<dbReference type="InterPro" id="IPR000589">
    <property type="entry name" value="Ribosomal_uS15"/>
</dbReference>
<dbReference type="InterPro" id="IPR005290">
    <property type="entry name" value="Ribosomal_uS15_bac-type"/>
</dbReference>
<dbReference type="InterPro" id="IPR009068">
    <property type="entry name" value="uS15_NS1_RNA-bd_sf"/>
</dbReference>
<dbReference type="NCBIfam" id="TIGR00952">
    <property type="entry name" value="S15_bact"/>
    <property type="match status" value="1"/>
</dbReference>
<dbReference type="PANTHER" id="PTHR23321">
    <property type="entry name" value="RIBOSOMAL PROTEIN S15, BACTERIAL AND ORGANELLAR"/>
    <property type="match status" value="1"/>
</dbReference>
<dbReference type="PANTHER" id="PTHR23321:SF26">
    <property type="entry name" value="SMALL RIBOSOMAL SUBUNIT PROTEIN US15M"/>
    <property type="match status" value="1"/>
</dbReference>
<dbReference type="Pfam" id="PF00312">
    <property type="entry name" value="Ribosomal_S15"/>
    <property type="match status" value="1"/>
</dbReference>
<dbReference type="SMART" id="SM01387">
    <property type="entry name" value="Ribosomal_S15"/>
    <property type="match status" value="1"/>
</dbReference>
<dbReference type="SUPFAM" id="SSF47060">
    <property type="entry name" value="S15/NS1 RNA-binding domain"/>
    <property type="match status" value="1"/>
</dbReference>
<dbReference type="PROSITE" id="PS00362">
    <property type="entry name" value="RIBOSOMAL_S15"/>
    <property type="match status" value="1"/>
</dbReference>
<evidence type="ECO:0000255" key="1">
    <source>
        <dbReference type="HAMAP-Rule" id="MF_01343"/>
    </source>
</evidence>
<evidence type="ECO:0000305" key="2"/>
<name>RS15_ANASK</name>
<keyword id="KW-0687">Ribonucleoprotein</keyword>
<keyword id="KW-0689">Ribosomal protein</keyword>
<keyword id="KW-0694">RNA-binding</keyword>
<keyword id="KW-0699">rRNA-binding</keyword>
<accession>B4UHG4</accession>
<protein>
    <recommendedName>
        <fullName evidence="1">Small ribosomal subunit protein uS15</fullName>
    </recommendedName>
    <alternativeName>
        <fullName evidence="2">30S ribosomal protein S15</fullName>
    </alternativeName>
</protein>
<feature type="chain" id="PRO_1000143070" description="Small ribosomal subunit protein uS15">
    <location>
        <begin position="1"/>
        <end position="89"/>
    </location>
</feature>
<sequence length="89" mass="10635">MALVQEKKQELVQKYKRHEKDTGSPEVQVALLSERIAYLTEHFKTHKKDHHSRRGLLKLVGQRRRLLDYLRTIDQGRYKTLIDQLGIRK</sequence>
<proteinExistence type="inferred from homology"/>
<comment type="function">
    <text evidence="1">One of the primary rRNA binding proteins, it binds directly to 16S rRNA where it helps nucleate assembly of the platform of the 30S subunit by binding and bridging several RNA helices of the 16S rRNA.</text>
</comment>
<comment type="function">
    <text evidence="1">Forms an intersubunit bridge (bridge B4) with the 23S rRNA of the 50S subunit in the ribosome.</text>
</comment>
<comment type="subunit">
    <text evidence="1">Part of the 30S ribosomal subunit. Forms a bridge to the 50S subunit in the 70S ribosome, contacting the 23S rRNA.</text>
</comment>
<comment type="similarity">
    <text evidence="1">Belongs to the universal ribosomal protein uS15 family.</text>
</comment>
<reference key="1">
    <citation type="submission" date="2008-08" db="EMBL/GenBank/DDBJ databases">
        <title>Complete sequence of Anaeromyxobacter sp. K.</title>
        <authorList>
            <consortium name="US DOE Joint Genome Institute"/>
            <person name="Lucas S."/>
            <person name="Copeland A."/>
            <person name="Lapidus A."/>
            <person name="Glavina del Rio T."/>
            <person name="Dalin E."/>
            <person name="Tice H."/>
            <person name="Bruce D."/>
            <person name="Goodwin L."/>
            <person name="Pitluck S."/>
            <person name="Saunders E."/>
            <person name="Brettin T."/>
            <person name="Detter J.C."/>
            <person name="Han C."/>
            <person name="Larimer F."/>
            <person name="Land M."/>
            <person name="Hauser L."/>
            <person name="Kyrpides N."/>
            <person name="Ovchinnikiva G."/>
            <person name="Beliaev A."/>
        </authorList>
    </citation>
    <scope>NUCLEOTIDE SEQUENCE [LARGE SCALE GENOMIC DNA]</scope>
    <source>
        <strain>K</strain>
    </source>
</reference>
<organism>
    <name type="scientific">Anaeromyxobacter sp. (strain K)</name>
    <dbReference type="NCBI Taxonomy" id="447217"/>
    <lineage>
        <taxon>Bacteria</taxon>
        <taxon>Pseudomonadati</taxon>
        <taxon>Myxococcota</taxon>
        <taxon>Myxococcia</taxon>
        <taxon>Myxococcales</taxon>
        <taxon>Cystobacterineae</taxon>
        <taxon>Anaeromyxobacteraceae</taxon>
        <taxon>Anaeromyxobacter</taxon>
    </lineage>
</organism>